<comment type="function">
    <text evidence="1">Functions in the biosynthesis of branched-chain amino acids. Catalyzes the dehydration of (2R,3R)-2,3-dihydroxy-3-methylpentanoate (2,3-dihydroxy-3-methylvalerate) into 2-oxo-3-methylpentanoate (2-oxo-3-methylvalerate) and of (2R)-2,3-dihydroxy-3-methylbutanoate (2,3-dihydroxyisovalerate) into 2-oxo-3-methylbutanoate (2-oxoisovalerate), the penultimate precursor to L-isoleucine and L-valine, respectively.</text>
</comment>
<comment type="catalytic activity">
    <reaction evidence="1">
        <text>(2R)-2,3-dihydroxy-3-methylbutanoate = 3-methyl-2-oxobutanoate + H2O</text>
        <dbReference type="Rhea" id="RHEA:24809"/>
        <dbReference type="ChEBI" id="CHEBI:11851"/>
        <dbReference type="ChEBI" id="CHEBI:15377"/>
        <dbReference type="ChEBI" id="CHEBI:49072"/>
        <dbReference type="EC" id="4.2.1.9"/>
    </reaction>
    <physiologicalReaction direction="left-to-right" evidence="1">
        <dbReference type="Rhea" id="RHEA:24810"/>
    </physiologicalReaction>
</comment>
<comment type="catalytic activity">
    <reaction evidence="1">
        <text>(2R,3R)-2,3-dihydroxy-3-methylpentanoate = (S)-3-methyl-2-oxopentanoate + H2O</text>
        <dbReference type="Rhea" id="RHEA:27694"/>
        <dbReference type="ChEBI" id="CHEBI:15377"/>
        <dbReference type="ChEBI" id="CHEBI:35146"/>
        <dbReference type="ChEBI" id="CHEBI:49258"/>
        <dbReference type="EC" id="4.2.1.9"/>
    </reaction>
    <physiologicalReaction direction="left-to-right" evidence="1">
        <dbReference type="Rhea" id="RHEA:27695"/>
    </physiologicalReaction>
</comment>
<comment type="cofactor">
    <cofactor evidence="1">
        <name>[2Fe-2S] cluster</name>
        <dbReference type="ChEBI" id="CHEBI:190135"/>
    </cofactor>
    <text evidence="1">Binds 1 [2Fe-2S] cluster per subunit. This cluster acts as a Lewis acid cofactor.</text>
</comment>
<comment type="cofactor">
    <cofactor evidence="1">
        <name>Mg(2+)</name>
        <dbReference type="ChEBI" id="CHEBI:18420"/>
    </cofactor>
</comment>
<comment type="pathway">
    <text evidence="1">Amino-acid biosynthesis; L-isoleucine biosynthesis; L-isoleucine from 2-oxobutanoate: step 3/4.</text>
</comment>
<comment type="pathway">
    <text evidence="1">Amino-acid biosynthesis; L-valine biosynthesis; L-valine from pyruvate: step 3/4.</text>
</comment>
<comment type="subunit">
    <text evidence="1">Homodimer.</text>
</comment>
<comment type="similarity">
    <text evidence="1">Belongs to the IlvD/Edd family.</text>
</comment>
<gene>
    <name evidence="1" type="primary">ilvD</name>
    <name type="ordered locus">SMU_2128</name>
</gene>
<protein>
    <recommendedName>
        <fullName evidence="1">Dihydroxy-acid dehydratase</fullName>
        <shortName evidence="1">DAD</shortName>
        <ecNumber evidence="1">4.2.1.9</ecNumber>
    </recommendedName>
</protein>
<dbReference type="EC" id="4.2.1.9" evidence="1"/>
<dbReference type="EMBL" id="AE014133">
    <property type="protein sequence ID" value="AAN59720.1"/>
    <property type="molecule type" value="Genomic_DNA"/>
</dbReference>
<dbReference type="RefSeq" id="NP_722414.1">
    <property type="nucleotide sequence ID" value="NC_004350.2"/>
</dbReference>
<dbReference type="RefSeq" id="WP_002262431.1">
    <property type="nucleotide sequence ID" value="NC_004350.2"/>
</dbReference>
<dbReference type="SMR" id="Q8DRT7"/>
<dbReference type="STRING" id="210007.SMU_2128"/>
<dbReference type="KEGG" id="smu:SMU_2128"/>
<dbReference type="PATRIC" id="fig|210007.7.peg.1894"/>
<dbReference type="eggNOG" id="COG0129">
    <property type="taxonomic scope" value="Bacteria"/>
</dbReference>
<dbReference type="HOGENOM" id="CLU_014271_4_2_9"/>
<dbReference type="OrthoDB" id="9807077at2"/>
<dbReference type="PhylomeDB" id="Q8DRT7"/>
<dbReference type="UniPathway" id="UPA00047">
    <property type="reaction ID" value="UER00057"/>
</dbReference>
<dbReference type="UniPathway" id="UPA00049">
    <property type="reaction ID" value="UER00061"/>
</dbReference>
<dbReference type="Proteomes" id="UP000002512">
    <property type="component" value="Chromosome"/>
</dbReference>
<dbReference type="GO" id="GO:0051537">
    <property type="term" value="F:2 iron, 2 sulfur cluster binding"/>
    <property type="evidence" value="ECO:0007669"/>
    <property type="project" value="UniProtKB-UniRule"/>
</dbReference>
<dbReference type="GO" id="GO:0004160">
    <property type="term" value="F:dihydroxy-acid dehydratase activity"/>
    <property type="evidence" value="ECO:0007669"/>
    <property type="project" value="UniProtKB-UniRule"/>
</dbReference>
<dbReference type="GO" id="GO:0000287">
    <property type="term" value="F:magnesium ion binding"/>
    <property type="evidence" value="ECO:0007669"/>
    <property type="project" value="UniProtKB-UniRule"/>
</dbReference>
<dbReference type="GO" id="GO:0009097">
    <property type="term" value="P:isoleucine biosynthetic process"/>
    <property type="evidence" value="ECO:0007669"/>
    <property type="project" value="UniProtKB-UniRule"/>
</dbReference>
<dbReference type="GO" id="GO:0009099">
    <property type="term" value="P:L-valine biosynthetic process"/>
    <property type="evidence" value="ECO:0007669"/>
    <property type="project" value="UniProtKB-UniRule"/>
</dbReference>
<dbReference type="FunFam" id="3.50.30.80:FF:000001">
    <property type="entry name" value="Dihydroxy-acid dehydratase"/>
    <property type="match status" value="1"/>
</dbReference>
<dbReference type="Gene3D" id="3.50.30.80">
    <property type="entry name" value="IlvD/EDD C-terminal domain-like"/>
    <property type="match status" value="1"/>
</dbReference>
<dbReference type="HAMAP" id="MF_00012">
    <property type="entry name" value="IlvD"/>
    <property type="match status" value="1"/>
</dbReference>
<dbReference type="InterPro" id="IPR050165">
    <property type="entry name" value="DHAD_IlvD/Edd"/>
</dbReference>
<dbReference type="InterPro" id="IPR042096">
    <property type="entry name" value="Dihydro-acid_dehy_C"/>
</dbReference>
<dbReference type="InterPro" id="IPR004404">
    <property type="entry name" value="DihydroxyA_deHydtase"/>
</dbReference>
<dbReference type="InterPro" id="IPR020558">
    <property type="entry name" value="DiOHA_6PGluconate_deHydtase_CS"/>
</dbReference>
<dbReference type="InterPro" id="IPR056740">
    <property type="entry name" value="ILV_EDD_C"/>
</dbReference>
<dbReference type="InterPro" id="IPR000581">
    <property type="entry name" value="ILV_EDD_N"/>
</dbReference>
<dbReference type="InterPro" id="IPR037237">
    <property type="entry name" value="IlvD/EDD_N"/>
</dbReference>
<dbReference type="NCBIfam" id="TIGR00110">
    <property type="entry name" value="ilvD"/>
    <property type="match status" value="1"/>
</dbReference>
<dbReference type="NCBIfam" id="NF002068">
    <property type="entry name" value="PRK00911.1"/>
    <property type="match status" value="1"/>
</dbReference>
<dbReference type="PANTHER" id="PTHR21000">
    <property type="entry name" value="DIHYDROXY-ACID DEHYDRATASE DAD"/>
    <property type="match status" value="1"/>
</dbReference>
<dbReference type="PANTHER" id="PTHR21000:SF5">
    <property type="entry name" value="DIHYDROXY-ACID DEHYDRATASE, MITOCHONDRIAL"/>
    <property type="match status" value="1"/>
</dbReference>
<dbReference type="Pfam" id="PF24877">
    <property type="entry name" value="ILV_EDD_C"/>
    <property type="match status" value="1"/>
</dbReference>
<dbReference type="Pfam" id="PF00920">
    <property type="entry name" value="ILVD_EDD_N"/>
    <property type="match status" value="1"/>
</dbReference>
<dbReference type="SUPFAM" id="SSF143975">
    <property type="entry name" value="IlvD/EDD N-terminal domain-like"/>
    <property type="match status" value="1"/>
</dbReference>
<dbReference type="SUPFAM" id="SSF52016">
    <property type="entry name" value="LeuD/IlvD-like"/>
    <property type="match status" value="1"/>
</dbReference>
<dbReference type="PROSITE" id="PS00886">
    <property type="entry name" value="ILVD_EDD_1"/>
    <property type="match status" value="1"/>
</dbReference>
<dbReference type="PROSITE" id="PS00887">
    <property type="entry name" value="ILVD_EDD_2"/>
    <property type="match status" value="1"/>
</dbReference>
<feature type="chain" id="PRO_0000103515" description="Dihydroxy-acid dehydratase">
    <location>
        <begin position="1"/>
        <end position="571"/>
    </location>
</feature>
<feature type="active site" description="Proton acceptor" evidence="1">
    <location>
        <position position="478"/>
    </location>
</feature>
<feature type="binding site" evidence="1">
    <location>
        <position position="56"/>
    </location>
    <ligand>
        <name>[2Fe-2S] cluster</name>
        <dbReference type="ChEBI" id="CHEBI:190135"/>
    </ligand>
</feature>
<feature type="binding site" evidence="1">
    <location>
        <position position="88"/>
    </location>
    <ligand>
        <name>Mg(2+)</name>
        <dbReference type="ChEBI" id="CHEBI:18420"/>
    </ligand>
</feature>
<feature type="binding site" evidence="1">
    <location>
        <position position="129"/>
    </location>
    <ligand>
        <name>[2Fe-2S] cluster</name>
        <dbReference type="ChEBI" id="CHEBI:190135"/>
    </ligand>
</feature>
<feature type="binding site" evidence="1">
    <location>
        <position position="130"/>
    </location>
    <ligand>
        <name>Mg(2+)</name>
        <dbReference type="ChEBI" id="CHEBI:18420"/>
    </ligand>
</feature>
<feature type="binding site" description="via carbamate group" evidence="1">
    <location>
        <position position="131"/>
    </location>
    <ligand>
        <name>Mg(2+)</name>
        <dbReference type="ChEBI" id="CHEBI:18420"/>
    </ligand>
</feature>
<feature type="binding site" evidence="1">
    <location>
        <position position="201"/>
    </location>
    <ligand>
        <name>[2Fe-2S] cluster</name>
        <dbReference type="ChEBI" id="CHEBI:190135"/>
    </ligand>
</feature>
<feature type="binding site" evidence="1">
    <location>
        <position position="452"/>
    </location>
    <ligand>
        <name>Mg(2+)</name>
        <dbReference type="ChEBI" id="CHEBI:18420"/>
    </ligand>
</feature>
<feature type="modified residue" description="N6-carboxylysine" evidence="1">
    <location>
        <position position="131"/>
    </location>
</feature>
<sequence length="571" mass="60780">MTDKKTLKDLRNRSSVYDSMVKSPNRAMLRATGMQDEDFEKPIVGVISTWAENTPCNIHLHDFGKLAKVGVKEAGAWPVQFGTITVSDGIAMGTQGMRFSLTSRDIIADSIEAAMGGHNADAFVAIGGCDKNMPGSVIAMANMDIPAIFAYGGTIAPGNLDGKDIDLVSVFEGVGHWNHGDMTKEEVKALECNACPGPGGCGGMYTANTMATAIEVLGLSLPGSSSHPAESAEKKADIEEAGRAVVKMLEMGLKPSDILTREAFEDAITVTMALGGSTNSTLHLLAIAHAANVELTLDDFNTFQEKVPHLADLKPSGQYVFQDLYKVGGVPAVMKYLLKNGFLHGDRITCTGKTVAENLKAFDDLTPGQKVIMPLENPKREDGPLIILHGNLAPDGAVAKVSGVKVRRHVGPAKVFNSEEEAIEAVLNDDIVDGDVVVVRFVGPKGGPGMPEMLSLSSMIVGKGQGEKVALLTDGRFSGGTYGLVVGHIAPEAQDGGPIAYLQTGDIVTIDQDTKELHFDISDEELKHRQETIELPPLYSRGILGKYAHIVSSASRGAVTDFWKPEETGKK</sequence>
<keyword id="KW-0001">2Fe-2S</keyword>
<keyword id="KW-0028">Amino-acid biosynthesis</keyword>
<keyword id="KW-0100">Branched-chain amino acid biosynthesis</keyword>
<keyword id="KW-0408">Iron</keyword>
<keyword id="KW-0411">Iron-sulfur</keyword>
<keyword id="KW-0456">Lyase</keyword>
<keyword id="KW-0460">Magnesium</keyword>
<keyword id="KW-0479">Metal-binding</keyword>
<keyword id="KW-1185">Reference proteome</keyword>
<reference key="1">
    <citation type="journal article" date="2002" name="Proc. Natl. Acad. Sci. U.S.A.">
        <title>Genome sequence of Streptococcus mutans UA159, a cariogenic dental pathogen.</title>
        <authorList>
            <person name="Ajdic D.J."/>
            <person name="McShan W.M."/>
            <person name="McLaughlin R.E."/>
            <person name="Savic G."/>
            <person name="Chang J."/>
            <person name="Carson M.B."/>
            <person name="Primeaux C."/>
            <person name="Tian R."/>
            <person name="Kenton S."/>
            <person name="Jia H.G."/>
            <person name="Lin S.P."/>
            <person name="Qian Y."/>
            <person name="Li S."/>
            <person name="Zhu H."/>
            <person name="Najar F.Z."/>
            <person name="Lai H."/>
            <person name="White J."/>
            <person name="Roe B.A."/>
            <person name="Ferretti J.J."/>
        </authorList>
    </citation>
    <scope>NUCLEOTIDE SEQUENCE [LARGE SCALE GENOMIC DNA]</scope>
    <source>
        <strain>ATCC 700610 / UA159</strain>
    </source>
</reference>
<name>ILVD_STRMU</name>
<accession>Q8DRT7</accession>
<organism>
    <name type="scientific">Streptococcus mutans serotype c (strain ATCC 700610 / UA159)</name>
    <dbReference type="NCBI Taxonomy" id="210007"/>
    <lineage>
        <taxon>Bacteria</taxon>
        <taxon>Bacillati</taxon>
        <taxon>Bacillota</taxon>
        <taxon>Bacilli</taxon>
        <taxon>Lactobacillales</taxon>
        <taxon>Streptococcaceae</taxon>
        <taxon>Streptococcus</taxon>
    </lineage>
</organism>
<evidence type="ECO:0000255" key="1">
    <source>
        <dbReference type="HAMAP-Rule" id="MF_00012"/>
    </source>
</evidence>
<proteinExistence type="inferred from homology"/>